<reference key="1">
    <citation type="journal article" date="2005" name="Nature">
        <title>The DNA sequence of the human X chromosome.</title>
        <authorList>
            <person name="Ross M.T."/>
            <person name="Grafham D.V."/>
            <person name="Coffey A.J."/>
            <person name="Scherer S."/>
            <person name="McLay K."/>
            <person name="Muzny D."/>
            <person name="Platzer M."/>
            <person name="Howell G.R."/>
            <person name="Burrows C."/>
            <person name="Bird C.P."/>
            <person name="Frankish A."/>
            <person name="Lovell F.L."/>
            <person name="Howe K.L."/>
            <person name="Ashurst J.L."/>
            <person name="Fulton R.S."/>
            <person name="Sudbrak R."/>
            <person name="Wen G."/>
            <person name="Jones M.C."/>
            <person name="Hurles M.E."/>
            <person name="Andrews T.D."/>
            <person name="Scott C.E."/>
            <person name="Searle S."/>
            <person name="Ramser J."/>
            <person name="Whittaker A."/>
            <person name="Deadman R."/>
            <person name="Carter N.P."/>
            <person name="Hunt S.E."/>
            <person name="Chen R."/>
            <person name="Cree A."/>
            <person name="Gunaratne P."/>
            <person name="Havlak P."/>
            <person name="Hodgson A."/>
            <person name="Metzker M.L."/>
            <person name="Richards S."/>
            <person name="Scott G."/>
            <person name="Steffen D."/>
            <person name="Sodergren E."/>
            <person name="Wheeler D.A."/>
            <person name="Worley K.C."/>
            <person name="Ainscough R."/>
            <person name="Ambrose K.D."/>
            <person name="Ansari-Lari M.A."/>
            <person name="Aradhya S."/>
            <person name="Ashwell R.I."/>
            <person name="Babbage A.K."/>
            <person name="Bagguley C.L."/>
            <person name="Ballabio A."/>
            <person name="Banerjee R."/>
            <person name="Barker G.E."/>
            <person name="Barlow K.F."/>
            <person name="Barrett I.P."/>
            <person name="Bates K.N."/>
            <person name="Beare D.M."/>
            <person name="Beasley H."/>
            <person name="Beasley O."/>
            <person name="Beck A."/>
            <person name="Bethel G."/>
            <person name="Blechschmidt K."/>
            <person name="Brady N."/>
            <person name="Bray-Allen S."/>
            <person name="Bridgeman A.M."/>
            <person name="Brown A.J."/>
            <person name="Brown M.J."/>
            <person name="Bonnin D."/>
            <person name="Bruford E.A."/>
            <person name="Buhay C."/>
            <person name="Burch P."/>
            <person name="Burford D."/>
            <person name="Burgess J."/>
            <person name="Burrill W."/>
            <person name="Burton J."/>
            <person name="Bye J.M."/>
            <person name="Carder C."/>
            <person name="Carrel L."/>
            <person name="Chako J."/>
            <person name="Chapman J.C."/>
            <person name="Chavez D."/>
            <person name="Chen E."/>
            <person name="Chen G."/>
            <person name="Chen Y."/>
            <person name="Chen Z."/>
            <person name="Chinault C."/>
            <person name="Ciccodicola A."/>
            <person name="Clark S.Y."/>
            <person name="Clarke G."/>
            <person name="Clee C.M."/>
            <person name="Clegg S."/>
            <person name="Clerc-Blankenburg K."/>
            <person name="Clifford K."/>
            <person name="Cobley V."/>
            <person name="Cole C.G."/>
            <person name="Conquer J.S."/>
            <person name="Corby N."/>
            <person name="Connor R.E."/>
            <person name="David R."/>
            <person name="Davies J."/>
            <person name="Davis C."/>
            <person name="Davis J."/>
            <person name="Delgado O."/>
            <person name="Deshazo D."/>
            <person name="Dhami P."/>
            <person name="Ding Y."/>
            <person name="Dinh H."/>
            <person name="Dodsworth S."/>
            <person name="Draper H."/>
            <person name="Dugan-Rocha S."/>
            <person name="Dunham A."/>
            <person name="Dunn M."/>
            <person name="Durbin K.J."/>
            <person name="Dutta I."/>
            <person name="Eades T."/>
            <person name="Ellwood M."/>
            <person name="Emery-Cohen A."/>
            <person name="Errington H."/>
            <person name="Evans K.L."/>
            <person name="Faulkner L."/>
            <person name="Francis F."/>
            <person name="Frankland J."/>
            <person name="Fraser A.E."/>
            <person name="Galgoczy P."/>
            <person name="Gilbert J."/>
            <person name="Gill R."/>
            <person name="Gloeckner G."/>
            <person name="Gregory S.G."/>
            <person name="Gribble S."/>
            <person name="Griffiths C."/>
            <person name="Grocock R."/>
            <person name="Gu Y."/>
            <person name="Gwilliam R."/>
            <person name="Hamilton C."/>
            <person name="Hart E.A."/>
            <person name="Hawes A."/>
            <person name="Heath P.D."/>
            <person name="Heitmann K."/>
            <person name="Hennig S."/>
            <person name="Hernandez J."/>
            <person name="Hinzmann B."/>
            <person name="Ho S."/>
            <person name="Hoffs M."/>
            <person name="Howden P.J."/>
            <person name="Huckle E.J."/>
            <person name="Hume J."/>
            <person name="Hunt P.J."/>
            <person name="Hunt A.R."/>
            <person name="Isherwood J."/>
            <person name="Jacob L."/>
            <person name="Johnson D."/>
            <person name="Jones S."/>
            <person name="de Jong P.J."/>
            <person name="Joseph S.S."/>
            <person name="Keenan S."/>
            <person name="Kelly S."/>
            <person name="Kershaw J.K."/>
            <person name="Khan Z."/>
            <person name="Kioschis P."/>
            <person name="Klages S."/>
            <person name="Knights A.J."/>
            <person name="Kosiura A."/>
            <person name="Kovar-Smith C."/>
            <person name="Laird G.K."/>
            <person name="Langford C."/>
            <person name="Lawlor S."/>
            <person name="Leversha M."/>
            <person name="Lewis L."/>
            <person name="Liu W."/>
            <person name="Lloyd C."/>
            <person name="Lloyd D.M."/>
            <person name="Loulseged H."/>
            <person name="Loveland J.E."/>
            <person name="Lovell J.D."/>
            <person name="Lozado R."/>
            <person name="Lu J."/>
            <person name="Lyne R."/>
            <person name="Ma J."/>
            <person name="Maheshwari M."/>
            <person name="Matthews L.H."/>
            <person name="McDowall J."/>
            <person name="McLaren S."/>
            <person name="McMurray A."/>
            <person name="Meidl P."/>
            <person name="Meitinger T."/>
            <person name="Milne S."/>
            <person name="Miner G."/>
            <person name="Mistry S.L."/>
            <person name="Morgan M."/>
            <person name="Morris S."/>
            <person name="Mueller I."/>
            <person name="Mullikin J.C."/>
            <person name="Nguyen N."/>
            <person name="Nordsiek G."/>
            <person name="Nyakatura G."/>
            <person name="O'dell C.N."/>
            <person name="Okwuonu G."/>
            <person name="Palmer S."/>
            <person name="Pandian R."/>
            <person name="Parker D."/>
            <person name="Parrish J."/>
            <person name="Pasternak S."/>
            <person name="Patel D."/>
            <person name="Pearce A.V."/>
            <person name="Pearson D.M."/>
            <person name="Pelan S.E."/>
            <person name="Perez L."/>
            <person name="Porter K.M."/>
            <person name="Ramsey Y."/>
            <person name="Reichwald K."/>
            <person name="Rhodes S."/>
            <person name="Ridler K.A."/>
            <person name="Schlessinger D."/>
            <person name="Schueler M.G."/>
            <person name="Sehra H.K."/>
            <person name="Shaw-Smith C."/>
            <person name="Shen H."/>
            <person name="Sheridan E.M."/>
            <person name="Shownkeen R."/>
            <person name="Skuce C.D."/>
            <person name="Smith M.L."/>
            <person name="Sotheran E.C."/>
            <person name="Steingruber H.E."/>
            <person name="Steward C.A."/>
            <person name="Storey R."/>
            <person name="Swann R.M."/>
            <person name="Swarbreck D."/>
            <person name="Tabor P.E."/>
            <person name="Taudien S."/>
            <person name="Taylor T."/>
            <person name="Teague B."/>
            <person name="Thomas K."/>
            <person name="Thorpe A."/>
            <person name="Timms K."/>
            <person name="Tracey A."/>
            <person name="Trevanion S."/>
            <person name="Tromans A.C."/>
            <person name="d'Urso M."/>
            <person name="Verduzco D."/>
            <person name="Villasana D."/>
            <person name="Waldron L."/>
            <person name="Wall M."/>
            <person name="Wang Q."/>
            <person name="Warren J."/>
            <person name="Warry G.L."/>
            <person name="Wei X."/>
            <person name="West A."/>
            <person name="Whitehead S.L."/>
            <person name="Whiteley M.N."/>
            <person name="Wilkinson J.E."/>
            <person name="Willey D.L."/>
            <person name="Williams G."/>
            <person name="Williams L."/>
            <person name="Williamson A."/>
            <person name="Williamson H."/>
            <person name="Wilming L."/>
            <person name="Woodmansey R.L."/>
            <person name="Wray P.W."/>
            <person name="Yen J."/>
            <person name="Zhang J."/>
            <person name="Zhou J."/>
            <person name="Zoghbi H."/>
            <person name="Zorilla S."/>
            <person name="Buck D."/>
            <person name="Reinhardt R."/>
            <person name="Poustka A."/>
            <person name="Rosenthal A."/>
            <person name="Lehrach H."/>
            <person name="Meindl A."/>
            <person name="Minx P.J."/>
            <person name="Hillier L.W."/>
            <person name="Willard H.F."/>
            <person name="Wilson R.K."/>
            <person name="Waterston R.H."/>
            <person name="Rice C.M."/>
            <person name="Vaudin M."/>
            <person name="Coulson A."/>
            <person name="Nelson D.L."/>
            <person name="Weinstock G."/>
            <person name="Sulston J.E."/>
            <person name="Durbin R.M."/>
            <person name="Hubbard T."/>
            <person name="Gibbs R.A."/>
            <person name="Beck S."/>
            <person name="Rogers J."/>
            <person name="Bentley D.R."/>
        </authorList>
    </citation>
    <scope>NUCLEOTIDE SEQUENCE [LARGE SCALE GENOMIC DNA]</scope>
</reference>
<reference key="2">
    <citation type="journal article" date="2001" name="DNA Res.">
        <title>Prediction of the coding sequences of unidentified human genes. XX. The complete sequences of 100 new cDNA clones from brain which code for large proteins in vitro.</title>
        <authorList>
            <person name="Nagase T."/>
            <person name="Nakayama M."/>
            <person name="Nakajima D."/>
            <person name="Kikuno R."/>
            <person name="Ohara O."/>
        </authorList>
    </citation>
    <scope>NUCLEOTIDE SEQUENCE [LARGE SCALE MRNA] OF 790-1777</scope>
    <source>
        <tissue>Brain</tissue>
    </source>
</reference>
<feature type="chain" id="PRO_0000254650" description="FERM and PDZ domain-containing protein 3">
    <location>
        <begin position="1"/>
        <end position="1777"/>
    </location>
</feature>
<feature type="domain" description="PDZ" evidence="2">
    <location>
        <begin position="21"/>
        <end position="98"/>
    </location>
</feature>
<feature type="domain" description="FERM" evidence="1">
    <location>
        <begin position="147"/>
        <end position="461"/>
    </location>
</feature>
<feature type="region of interest" description="Disordered" evidence="3">
    <location>
        <begin position="491"/>
        <end position="520"/>
    </location>
</feature>
<feature type="region of interest" description="Disordered" evidence="3">
    <location>
        <begin position="555"/>
        <end position="574"/>
    </location>
</feature>
<feature type="region of interest" description="Disordered" evidence="3">
    <location>
        <begin position="622"/>
        <end position="697"/>
    </location>
</feature>
<feature type="region of interest" description="Disordered" evidence="3">
    <location>
        <begin position="832"/>
        <end position="871"/>
    </location>
</feature>
<feature type="region of interest" description="Disordered" evidence="3">
    <location>
        <begin position="1014"/>
        <end position="1216"/>
    </location>
</feature>
<feature type="region of interest" description="Disordered" evidence="3">
    <location>
        <begin position="1309"/>
        <end position="1346"/>
    </location>
</feature>
<feature type="region of interest" description="Disordered" evidence="3">
    <location>
        <begin position="1732"/>
        <end position="1765"/>
    </location>
</feature>
<feature type="compositionally biased region" description="Polar residues" evidence="3">
    <location>
        <begin position="502"/>
        <end position="511"/>
    </location>
</feature>
<feature type="compositionally biased region" description="Basic and acidic residues" evidence="3">
    <location>
        <begin position="555"/>
        <end position="564"/>
    </location>
</feature>
<feature type="compositionally biased region" description="Acidic residues" evidence="3">
    <location>
        <begin position="649"/>
        <end position="659"/>
    </location>
</feature>
<feature type="compositionally biased region" description="Polar residues" evidence="3">
    <location>
        <begin position="840"/>
        <end position="850"/>
    </location>
</feature>
<feature type="compositionally biased region" description="Polar residues" evidence="3">
    <location>
        <begin position="1015"/>
        <end position="1035"/>
    </location>
</feature>
<feature type="compositionally biased region" description="Polar residues" evidence="3">
    <location>
        <begin position="1046"/>
        <end position="1056"/>
    </location>
</feature>
<feature type="compositionally biased region" description="Polar residues" evidence="3">
    <location>
        <begin position="1094"/>
        <end position="1111"/>
    </location>
</feature>
<feature type="compositionally biased region" description="Low complexity" evidence="3">
    <location>
        <begin position="1134"/>
        <end position="1168"/>
    </location>
</feature>
<feature type="compositionally biased region" description="Polar residues" evidence="3">
    <location>
        <begin position="1172"/>
        <end position="1202"/>
    </location>
</feature>
<feature type="compositionally biased region" description="Low complexity" evidence="3">
    <location>
        <begin position="1732"/>
        <end position="1751"/>
    </location>
</feature>
<sequence length="1777" mass="195652">MQEESANDMECEQLPAEILRQVTVHRDPIYGFGFVAGSERPVVVRSVRPGGPSENKLLAGDQIVAINEEDVSEAPRERLIELIRSAKEFIVLTVLHTHQSPKSAFISAAKKAKLRSNPVKVRFSEQVAVGETDAKMMKKEALLLIPNVLKVFLENGQIKSFTFDGRTTVKDVMLTLQDRLSLRFIEHFALVLEYAGPEQNHKFLLLQDKQPLAYVVQRTHYHGMKCLFRISFFPKDPVELLRRDPAAFEYLYIQSRNDVIRERFGMDPKPEMLLGLAALHIYITVSATRPSQKISLKNVEKEWGLEPFLPPSLLQVIKEKNLRKSLSQQLKAHQTHPSCGTKGSAIQAKLQYLRILNELPTFTGVLFNTVGLDEKQSATTLLVGPRHGISHVIDLKTNLTTVLSEFSKISKIQLFRENQGVARVETSIMDAKPLVLLMEWPEATNFACLIAGYCRLLLDSRKMVFSRPASQPLPPPMIKADYMHSAHRPVTGGHLGKKESSYVGSVGTSPRKSSRCTPPPADSELVSFCYLHMREQRKEQESRTDVNENLIFFEETRPRTKSDPTSKSSGQGYEVVPDDFDAASLDHEPCASRARSYTLDNSLGAEALNFYCDSCKAKLQEQLGPRKGGKPGSSRDNIVDLMSLPPPGSEEEEEEEDETTSLLPAIAAPPPGFRDNSSDEDDPKRRAVQSQEQGRHLRGLLYDEIPVTLIDSVQTRTVRDHAQELDDALVSTLQALEALAASEDGPHPPPPQTAGLIVLATITPESSLDSGHETNSSELTDMSEMMSAMKQHQNTTYFLAQHLNKDSLLARKDLPFRIQSCAAQAVLTAPYSLGRPDPNPSLQPIATGQSPGPPGARRKLPQSEGQVQGERTYSLAVHPALSPQLSEQKNLSLLSPVPEDKGPGHTRAGLEMSLRAATSSLSEEQVSELRDNLPKEVRLSPKLILDPKSSVTPAIISAALQQVVHNKSLVTAGGALGNPPSRGERRLEASMGRPEVSMMSSSASKNLKFKISPSAPETSWNSQHQLGAEVSSSPRAPTGSRADSLHLSQQEDSLPVQNFPPKSYLLRTSRESVGKQATGEVAGKGGPVGGKPTLQKQGTISSQGEKAQLESTPKRSKLEETSLVPRATYPMALQSPSCQSRSHSPSCQPHGHSPSSQSRGQSPSCQPRGQSPLRSQAASRQVSTMPSRKLETTLNGAHSTSEGPAKPKSSRGPFRLRNLFSATFPTRQKKETDERQAQLQKVKQYELEFLEELLKPPSQGELPGTEYLQPPAPGRCSCQLRSSPVQQGPGMSREQRRSCDCKRICRGGRPQATQTPVPSLRGRERDRVLPSQRQPEAGPGVSLSSPINVQRIRSTSLESRECRSDPESGVSCLTTCASGGECLGAPNYRKLMRRYSISELDQGDRASLTSDVYPHPPLGMLPREAKEVEASLPIALGPKSRSLESPTLGDPSYVQVAPETKGPRQMAVFSLPEEVYRKPAELDEDSESSKCCSIRYCFYYRKCDMADDASDGKDELSYSIPMKILPGMKLDEQVVPVVSRTLQVLDAATCSSSSPEASRTQEIDLRVSTFEGSLAKINALRAHAYGLPDGFLAARLDTNELLTVLRQCVASPEARAPKPYVSQISEYKLELALKFKELRASCRRVANVDKSPTHMLAAITGSFQVLSSLIETFVRLVFIVRSEAQRQELLAKVEEVVRNYTFLLRAAEESTARNLNQQQQQQQQQQQQQQQQQQQQQQQQQQQVAAAAGAATEHPPGSPTSATVMSTFTHSLKTLIK</sequence>
<keyword id="KW-1267">Proteomics identification</keyword>
<keyword id="KW-1185">Reference proteome</keyword>
<name>FRPD3_HUMAN</name>
<accession>Q5JV73</accession>
<accession>A0A804HKI5</accession>
<accession>Q96JK8</accession>
<comment type="sequence caution" evidence="4">
    <conflict type="erroneous initiation">
        <sequence resource="EMBL-CDS" id="BAB47446"/>
    </conflict>
    <text>Extended N-terminus.</text>
</comment>
<protein>
    <recommendedName>
        <fullName evidence="4">FERM and PDZ domain-containing protein 3</fullName>
    </recommendedName>
</protein>
<evidence type="ECO:0000255" key="1">
    <source>
        <dbReference type="PROSITE-ProRule" id="PRU00084"/>
    </source>
</evidence>
<evidence type="ECO:0000255" key="2">
    <source>
        <dbReference type="PROSITE-ProRule" id="PRU00143"/>
    </source>
</evidence>
<evidence type="ECO:0000256" key="3">
    <source>
        <dbReference type="SAM" id="MobiDB-lite"/>
    </source>
</evidence>
<evidence type="ECO:0000305" key="4"/>
<evidence type="ECO:0000312" key="5">
    <source>
        <dbReference type="HGNC" id="HGNC:29382"/>
    </source>
</evidence>
<dbReference type="EMBL" id="AL035088">
    <property type="status" value="NOT_ANNOTATED_CDS"/>
    <property type="molecule type" value="Genomic_DNA"/>
</dbReference>
<dbReference type="EMBL" id="AL137787">
    <property type="status" value="NOT_ANNOTATED_CDS"/>
    <property type="molecule type" value="Genomic_DNA"/>
</dbReference>
<dbReference type="EMBL" id="AB058720">
    <property type="protein sequence ID" value="BAB47446.1"/>
    <property type="status" value="ALT_INIT"/>
    <property type="molecule type" value="mRNA"/>
</dbReference>
<dbReference type="CCDS" id="CCDS94646.1"/>
<dbReference type="RefSeq" id="NP_001375388.1">
    <property type="nucleotide sequence ID" value="NM_001388459.1"/>
</dbReference>
<dbReference type="RefSeq" id="XP_016885390.1">
    <property type="nucleotide sequence ID" value="XM_017029901.1"/>
</dbReference>
<dbReference type="SMR" id="Q5JV73"/>
<dbReference type="BioGRID" id="124081">
    <property type="interactions" value="4"/>
</dbReference>
<dbReference type="FunCoup" id="Q5JV73">
    <property type="interactions" value="111"/>
</dbReference>
<dbReference type="IntAct" id="Q5JV73">
    <property type="interactions" value="1"/>
</dbReference>
<dbReference type="STRING" id="9606.ENSP00000276185"/>
<dbReference type="GlyGen" id="Q5JV73">
    <property type="glycosylation" value="1 site, 1 O-linked glycan (1 site)"/>
</dbReference>
<dbReference type="iPTMnet" id="Q5JV73"/>
<dbReference type="PhosphoSitePlus" id="Q5JV73"/>
<dbReference type="BioMuta" id="FRMPD3"/>
<dbReference type="DMDM" id="118582027"/>
<dbReference type="jPOST" id="Q5JV73"/>
<dbReference type="MassIVE" id="Q5JV73"/>
<dbReference type="PaxDb" id="9606-ENSP00000276185"/>
<dbReference type="PeptideAtlas" id="Q5JV73"/>
<dbReference type="ProteomicsDB" id="63310"/>
<dbReference type="Antibodypedia" id="572">
    <property type="antibodies" value="42 antibodies from 22 providers"/>
</dbReference>
<dbReference type="DNASU" id="84443"/>
<dbReference type="Ensembl" id="ENST00000276185.9">
    <property type="protein sequence ID" value="ENSP00000276185.5"/>
    <property type="gene ID" value="ENSG00000147234.11"/>
</dbReference>
<dbReference type="Ensembl" id="ENST00000683843.1">
    <property type="protein sequence ID" value="ENSP00000507942.1"/>
    <property type="gene ID" value="ENSG00000147234.11"/>
</dbReference>
<dbReference type="GeneID" id="84443"/>
<dbReference type="MANE-Select" id="ENST00000683843.1">
    <property type="protein sequence ID" value="ENSP00000507942.1"/>
    <property type="RefSeq nucleotide sequence ID" value="NM_001388459.1"/>
    <property type="RefSeq protein sequence ID" value="NP_001375388.1"/>
</dbReference>
<dbReference type="UCSC" id="uc033eqj.1">
    <property type="organism name" value="human"/>
</dbReference>
<dbReference type="AGR" id="HGNC:29382"/>
<dbReference type="GeneCards" id="FRMPD3"/>
<dbReference type="HGNC" id="HGNC:29382">
    <property type="gene designation" value="FRMPD3"/>
</dbReference>
<dbReference type="HPA" id="ENSG00000147234">
    <property type="expression patterns" value="Tissue enhanced (brain, thyroid gland)"/>
</dbReference>
<dbReference type="MIM" id="301005">
    <property type="type" value="gene"/>
</dbReference>
<dbReference type="neXtProt" id="NX_Q5JV73"/>
<dbReference type="OpenTargets" id="ENSG00000147234"/>
<dbReference type="PharmGKB" id="PA143485474"/>
<dbReference type="VEuPathDB" id="HostDB:ENSG00000147234"/>
<dbReference type="eggNOG" id="KOG3552">
    <property type="taxonomic scope" value="Eukaryota"/>
</dbReference>
<dbReference type="GeneTree" id="ENSGT00950000183035"/>
<dbReference type="InParanoid" id="Q5JV73"/>
<dbReference type="OrthoDB" id="5859304at2759"/>
<dbReference type="PAN-GO" id="Q5JV73">
    <property type="GO annotations" value="0 GO annotations based on evolutionary models"/>
</dbReference>
<dbReference type="PhylomeDB" id="Q5JV73"/>
<dbReference type="TreeFam" id="TF316497"/>
<dbReference type="PathwayCommons" id="Q5JV73"/>
<dbReference type="Reactome" id="R-HSA-6798695">
    <property type="pathway name" value="Neutrophil degranulation"/>
</dbReference>
<dbReference type="SignaLink" id="Q5JV73"/>
<dbReference type="BioGRID-ORCS" id="84443">
    <property type="hits" value="3 hits in 249 CRISPR screens"/>
</dbReference>
<dbReference type="ChiTaRS" id="FRMPD3">
    <property type="organism name" value="human"/>
</dbReference>
<dbReference type="GenomeRNAi" id="84443"/>
<dbReference type="Pharos" id="Q5JV73">
    <property type="development level" value="Tdark"/>
</dbReference>
<dbReference type="PRO" id="PR:Q5JV73"/>
<dbReference type="Proteomes" id="UP000005640">
    <property type="component" value="Chromosome X"/>
</dbReference>
<dbReference type="RNAct" id="Q5JV73">
    <property type="molecule type" value="protein"/>
</dbReference>
<dbReference type="Bgee" id="ENSG00000147234">
    <property type="expression patterns" value="Expressed in male germ line stem cell (sensu Vertebrata) in testis and 95 other cell types or tissues"/>
</dbReference>
<dbReference type="ExpressionAtlas" id="Q5JV73">
    <property type="expression patterns" value="baseline and differential"/>
</dbReference>
<dbReference type="GO" id="GO:0005856">
    <property type="term" value="C:cytoskeleton"/>
    <property type="evidence" value="ECO:0007669"/>
    <property type="project" value="InterPro"/>
</dbReference>
<dbReference type="GO" id="GO:0005886">
    <property type="term" value="C:plasma membrane"/>
    <property type="evidence" value="ECO:0000304"/>
    <property type="project" value="Reactome"/>
</dbReference>
<dbReference type="GO" id="GO:0030667">
    <property type="term" value="C:secretory granule membrane"/>
    <property type="evidence" value="ECO:0000304"/>
    <property type="project" value="Reactome"/>
</dbReference>
<dbReference type="GO" id="GO:0070821">
    <property type="term" value="C:tertiary granule membrane"/>
    <property type="evidence" value="ECO:0000304"/>
    <property type="project" value="Reactome"/>
</dbReference>
<dbReference type="CDD" id="cd14473">
    <property type="entry name" value="FERM_B-lobe"/>
    <property type="match status" value="1"/>
</dbReference>
<dbReference type="CDD" id="cd13183">
    <property type="entry name" value="FERM_C_FRMPD1_FRMPD3_FRMPD4"/>
    <property type="match status" value="1"/>
</dbReference>
<dbReference type="CDD" id="cd17169">
    <property type="entry name" value="FERM_F1_FRMPD3"/>
    <property type="match status" value="1"/>
</dbReference>
<dbReference type="CDD" id="cd06769">
    <property type="entry name" value="PDZ_FRMPD1_3_4-like"/>
    <property type="match status" value="1"/>
</dbReference>
<dbReference type="FunFam" id="2.30.42.10:FF:000169">
    <property type="entry name" value="FERM and PDZ domain containing 3"/>
    <property type="match status" value="1"/>
</dbReference>
<dbReference type="FunFam" id="1.20.80.10:FF:000009">
    <property type="entry name" value="FERM and PDZ domain containing 4"/>
    <property type="match status" value="1"/>
</dbReference>
<dbReference type="FunFam" id="2.30.29.30:FF:000066">
    <property type="entry name" value="FERM and PDZ domain-containing protein 4"/>
    <property type="match status" value="1"/>
</dbReference>
<dbReference type="Gene3D" id="1.20.80.10">
    <property type="match status" value="1"/>
</dbReference>
<dbReference type="Gene3D" id="2.30.42.10">
    <property type="match status" value="1"/>
</dbReference>
<dbReference type="Gene3D" id="2.30.29.30">
    <property type="entry name" value="Pleckstrin-homology domain (PH domain)/Phosphotyrosine-binding domain (PTB)"/>
    <property type="match status" value="1"/>
</dbReference>
<dbReference type="InterPro" id="IPR019749">
    <property type="entry name" value="Band_41_domain"/>
</dbReference>
<dbReference type="InterPro" id="IPR049385">
    <property type="entry name" value="FAK1-like_FERM_C"/>
</dbReference>
<dbReference type="InterPro" id="IPR014352">
    <property type="entry name" value="FERM/acyl-CoA-bd_prot_sf"/>
</dbReference>
<dbReference type="InterPro" id="IPR035963">
    <property type="entry name" value="FERM_2"/>
</dbReference>
<dbReference type="InterPro" id="IPR019748">
    <property type="entry name" value="FERM_central"/>
</dbReference>
<dbReference type="InterPro" id="IPR000299">
    <property type="entry name" value="FERM_domain"/>
</dbReference>
<dbReference type="InterPro" id="IPR041779">
    <property type="entry name" value="FRMPD1/3/4_FERM_C"/>
</dbReference>
<dbReference type="InterPro" id="IPR001478">
    <property type="entry name" value="PDZ"/>
</dbReference>
<dbReference type="InterPro" id="IPR036034">
    <property type="entry name" value="PDZ_sf"/>
</dbReference>
<dbReference type="InterPro" id="IPR011993">
    <property type="entry name" value="PH-like_dom_sf"/>
</dbReference>
<dbReference type="InterPro" id="IPR029071">
    <property type="entry name" value="Ubiquitin-like_domsf"/>
</dbReference>
<dbReference type="PANTHER" id="PTHR46221:SF1">
    <property type="entry name" value="FERM AND PDZ DOMAIN-CONTAINING PROTEIN 3"/>
    <property type="match status" value="1"/>
</dbReference>
<dbReference type="PANTHER" id="PTHR46221">
    <property type="entry name" value="FERM AND PDZ DOMAIN-CONTAINING PROTEIN FAMILY MEMBER"/>
    <property type="match status" value="1"/>
</dbReference>
<dbReference type="Pfam" id="PF21477">
    <property type="entry name" value="FERM_C_FAK1"/>
    <property type="match status" value="1"/>
</dbReference>
<dbReference type="Pfam" id="PF00373">
    <property type="entry name" value="FERM_M"/>
    <property type="match status" value="1"/>
</dbReference>
<dbReference type="Pfam" id="PF00595">
    <property type="entry name" value="PDZ"/>
    <property type="match status" value="1"/>
</dbReference>
<dbReference type="SMART" id="SM00295">
    <property type="entry name" value="B41"/>
    <property type="match status" value="1"/>
</dbReference>
<dbReference type="SMART" id="SM00228">
    <property type="entry name" value="PDZ"/>
    <property type="match status" value="1"/>
</dbReference>
<dbReference type="SUPFAM" id="SSF50156">
    <property type="entry name" value="PDZ domain-like"/>
    <property type="match status" value="1"/>
</dbReference>
<dbReference type="SUPFAM" id="SSF50729">
    <property type="entry name" value="PH domain-like"/>
    <property type="match status" value="1"/>
</dbReference>
<dbReference type="SUPFAM" id="SSF47031">
    <property type="entry name" value="Second domain of FERM"/>
    <property type="match status" value="1"/>
</dbReference>
<dbReference type="SUPFAM" id="SSF54236">
    <property type="entry name" value="Ubiquitin-like"/>
    <property type="match status" value="1"/>
</dbReference>
<dbReference type="PROSITE" id="PS50057">
    <property type="entry name" value="FERM_3"/>
    <property type="match status" value="1"/>
</dbReference>
<dbReference type="PROSITE" id="PS50106">
    <property type="entry name" value="PDZ"/>
    <property type="match status" value="1"/>
</dbReference>
<gene>
    <name evidence="5" type="primary">FRMPD3</name>
    <name type="synonym">KIAA1817</name>
</gene>
<organism>
    <name type="scientific">Homo sapiens</name>
    <name type="common">Human</name>
    <dbReference type="NCBI Taxonomy" id="9606"/>
    <lineage>
        <taxon>Eukaryota</taxon>
        <taxon>Metazoa</taxon>
        <taxon>Chordata</taxon>
        <taxon>Craniata</taxon>
        <taxon>Vertebrata</taxon>
        <taxon>Euteleostomi</taxon>
        <taxon>Mammalia</taxon>
        <taxon>Eutheria</taxon>
        <taxon>Euarchontoglires</taxon>
        <taxon>Primates</taxon>
        <taxon>Haplorrhini</taxon>
        <taxon>Catarrhini</taxon>
        <taxon>Hominidae</taxon>
        <taxon>Homo</taxon>
    </lineage>
</organism>
<proteinExistence type="evidence at protein level"/>